<evidence type="ECO:0000255" key="1">
    <source>
        <dbReference type="HAMAP-Rule" id="MF_00173"/>
    </source>
</evidence>
<keyword id="KW-0028">Amino-acid biosynthesis</keyword>
<keyword id="KW-0055">Arginine biosynthesis</keyword>
<keyword id="KW-0963">Cytoplasm</keyword>
<keyword id="KW-0238">DNA-binding</keyword>
<keyword id="KW-1185">Reference proteome</keyword>
<keyword id="KW-0678">Repressor</keyword>
<keyword id="KW-0804">Transcription</keyword>
<keyword id="KW-0805">Transcription regulation</keyword>
<protein>
    <recommendedName>
        <fullName evidence="1">Arginine repressor</fullName>
    </recommendedName>
</protein>
<sequence length="150" mass="16217">MVKARRQAKILELVRTRVIETQEELAAALAAEGIPVTQATISRDIKELQLTKVPMPDGRYRYALPEEPGAAAGERWRRIFREAVLTIDHSGNLVVIKSLPGTAQGVAAAIDHAGWPEMIGTVAGDDTVIVVVKPADATGEVAERLKGLMR</sequence>
<reference key="1">
    <citation type="journal article" date="2004" name="Nucleic Acids Res.">
        <title>Genome sequence of Symbiobacterium thermophilum, an uncultivable bacterium that depends on microbial commensalism.</title>
        <authorList>
            <person name="Ueda K."/>
            <person name="Yamashita A."/>
            <person name="Ishikawa J."/>
            <person name="Shimada M."/>
            <person name="Watsuji T."/>
            <person name="Morimura K."/>
            <person name="Ikeda H."/>
            <person name="Hattori M."/>
            <person name="Beppu T."/>
        </authorList>
    </citation>
    <scope>NUCLEOTIDE SEQUENCE [LARGE SCALE GENOMIC DNA]</scope>
    <source>
        <strain>DSM 24528 / JCM 14929 / IAM 14863 / T</strain>
    </source>
</reference>
<proteinExistence type="inferred from homology"/>
<accession>Q67NC2</accession>
<dbReference type="EMBL" id="AP006840">
    <property type="protein sequence ID" value="BAD40821.1"/>
    <property type="molecule type" value="Genomic_DNA"/>
</dbReference>
<dbReference type="SMR" id="Q67NC2"/>
<dbReference type="STRING" id="292459.STH1836"/>
<dbReference type="KEGG" id="sth:STH1836"/>
<dbReference type="eggNOG" id="COG1438">
    <property type="taxonomic scope" value="Bacteria"/>
</dbReference>
<dbReference type="HOGENOM" id="CLU_097103_3_0_9"/>
<dbReference type="UniPathway" id="UPA00068"/>
<dbReference type="Proteomes" id="UP000000417">
    <property type="component" value="Chromosome"/>
</dbReference>
<dbReference type="GO" id="GO:0005737">
    <property type="term" value="C:cytoplasm"/>
    <property type="evidence" value="ECO:0007669"/>
    <property type="project" value="UniProtKB-SubCell"/>
</dbReference>
<dbReference type="GO" id="GO:0034618">
    <property type="term" value="F:arginine binding"/>
    <property type="evidence" value="ECO:0007669"/>
    <property type="project" value="InterPro"/>
</dbReference>
<dbReference type="GO" id="GO:0003677">
    <property type="term" value="F:DNA binding"/>
    <property type="evidence" value="ECO:0007669"/>
    <property type="project" value="UniProtKB-KW"/>
</dbReference>
<dbReference type="GO" id="GO:0003700">
    <property type="term" value="F:DNA-binding transcription factor activity"/>
    <property type="evidence" value="ECO:0007669"/>
    <property type="project" value="UniProtKB-UniRule"/>
</dbReference>
<dbReference type="GO" id="GO:0006526">
    <property type="term" value="P:L-arginine biosynthetic process"/>
    <property type="evidence" value="ECO:0007669"/>
    <property type="project" value="UniProtKB-UniPathway"/>
</dbReference>
<dbReference type="GO" id="GO:0051259">
    <property type="term" value="P:protein complex oligomerization"/>
    <property type="evidence" value="ECO:0007669"/>
    <property type="project" value="InterPro"/>
</dbReference>
<dbReference type="GO" id="GO:1900079">
    <property type="term" value="P:regulation of arginine biosynthetic process"/>
    <property type="evidence" value="ECO:0007669"/>
    <property type="project" value="UniProtKB-UniRule"/>
</dbReference>
<dbReference type="Gene3D" id="3.30.1360.40">
    <property type="match status" value="1"/>
</dbReference>
<dbReference type="Gene3D" id="1.10.10.10">
    <property type="entry name" value="Winged helix-like DNA-binding domain superfamily/Winged helix DNA-binding domain"/>
    <property type="match status" value="1"/>
</dbReference>
<dbReference type="HAMAP" id="MF_00173">
    <property type="entry name" value="Arg_repressor"/>
    <property type="match status" value="1"/>
</dbReference>
<dbReference type="InterPro" id="IPR001669">
    <property type="entry name" value="Arg_repress"/>
</dbReference>
<dbReference type="InterPro" id="IPR020899">
    <property type="entry name" value="Arg_repress_C"/>
</dbReference>
<dbReference type="InterPro" id="IPR036251">
    <property type="entry name" value="Arg_repress_C_sf"/>
</dbReference>
<dbReference type="InterPro" id="IPR020900">
    <property type="entry name" value="Arg_repress_DNA-bd"/>
</dbReference>
<dbReference type="InterPro" id="IPR036388">
    <property type="entry name" value="WH-like_DNA-bd_sf"/>
</dbReference>
<dbReference type="InterPro" id="IPR036390">
    <property type="entry name" value="WH_DNA-bd_sf"/>
</dbReference>
<dbReference type="NCBIfam" id="TIGR01529">
    <property type="entry name" value="argR_whole"/>
    <property type="match status" value="1"/>
</dbReference>
<dbReference type="PANTHER" id="PTHR34471">
    <property type="entry name" value="ARGININE REPRESSOR"/>
    <property type="match status" value="1"/>
</dbReference>
<dbReference type="PANTHER" id="PTHR34471:SF1">
    <property type="entry name" value="ARGININE REPRESSOR"/>
    <property type="match status" value="1"/>
</dbReference>
<dbReference type="Pfam" id="PF01316">
    <property type="entry name" value="Arg_repressor"/>
    <property type="match status" value="1"/>
</dbReference>
<dbReference type="Pfam" id="PF02863">
    <property type="entry name" value="Arg_repressor_C"/>
    <property type="match status" value="1"/>
</dbReference>
<dbReference type="PRINTS" id="PR01467">
    <property type="entry name" value="ARGREPRESSOR"/>
</dbReference>
<dbReference type="SUPFAM" id="SSF55252">
    <property type="entry name" value="C-terminal domain of arginine repressor"/>
    <property type="match status" value="1"/>
</dbReference>
<dbReference type="SUPFAM" id="SSF46785">
    <property type="entry name" value="Winged helix' DNA-binding domain"/>
    <property type="match status" value="1"/>
</dbReference>
<comment type="function">
    <text evidence="1">Regulates arginine biosynthesis genes.</text>
</comment>
<comment type="pathway">
    <text>Amino-acid biosynthesis; L-arginine biosynthesis [regulation].</text>
</comment>
<comment type="subcellular location">
    <subcellularLocation>
        <location evidence="1">Cytoplasm</location>
    </subcellularLocation>
</comment>
<comment type="similarity">
    <text evidence="1">Belongs to the ArgR family.</text>
</comment>
<organism>
    <name type="scientific">Symbiobacterium thermophilum (strain DSM 24528 / JCM 14929 / IAM 14863 / T)</name>
    <dbReference type="NCBI Taxonomy" id="292459"/>
    <lineage>
        <taxon>Bacteria</taxon>
        <taxon>Bacillati</taxon>
        <taxon>Bacillota</taxon>
        <taxon>Clostridia</taxon>
        <taxon>Eubacteriales</taxon>
        <taxon>Symbiobacteriaceae</taxon>
        <taxon>Symbiobacterium</taxon>
    </lineage>
</organism>
<name>ARGR_SYMTH</name>
<feature type="chain" id="PRO_0000205135" description="Arginine repressor">
    <location>
        <begin position="1"/>
        <end position="150"/>
    </location>
</feature>
<gene>
    <name evidence="1" type="primary">argR</name>
    <name type="ordered locus">STH1836</name>
</gene>